<gene>
    <name evidence="6" type="primary">Plekhs1</name>
</gene>
<keyword id="KW-0025">Alternative splicing</keyword>
<keyword id="KW-1185">Reference proteome</keyword>
<reference key="1">
    <citation type="journal article" date="2005" name="Science">
        <title>The transcriptional landscape of the mammalian genome.</title>
        <authorList>
            <person name="Carninci P."/>
            <person name="Kasukawa T."/>
            <person name="Katayama S."/>
            <person name="Gough J."/>
            <person name="Frith M.C."/>
            <person name="Maeda N."/>
            <person name="Oyama R."/>
            <person name="Ravasi T."/>
            <person name="Lenhard B."/>
            <person name="Wells C."/>
            <person name="Kodzius R."/>
            <person name="Shimokawa K."/>
            <person name="Bajic V.B."/>
            <person name="Brenner S.E."/>
            <person name="Batalov S."/>
            <person name="Forrest A.R."/>
            <person name="Zavolan M."/>
            <person name="Davis M.J."/>
            <person name="Wilming L.G."/>
            <person name="Aidinis V."/>
            <person name="Allen J.E."/>
            <person name="Ambesi-Impiombato A."/>
            <person name="Apweiler R."/>
            <person name="Aturaliya R.N."/>
            <person name="Bailey T.L."/>
            <person name="Bansal M."/>
            <person name="Baxter L."/>
            <person name="Beisel K.W."/>
            <person name="Bersano T."/>
            <person name="Bono H."/>
            <person name="Chalk A.M."/>
            <person name="Chiu K.P."/>
            <person name="Choudhary V."/>
            <person name="Christoffels A."/>
            <person name="Clutterbuck D.R."/>
            <person name="Crowe M.L."/>
            <person name="Dalla E."/>
            <person name="Dalrymple B.P."/>
            <person name="de Bono B."/>
            <person name="Della Gatta G."/>
            <person name="di Bernardo D."/>
            <person name="Down T."/>
            <person name="Engstrom P."/>
            <person name="Fagiolini M."/>
            <person name="Faulkner G."/>
            <person name="Fletcher C.F."/>
            <person name="Fukushima T."/>
            <person name="Furuno M."/>
            <person name="Futaki S."/>
            <person name="Gariboldi M."/>
            <person name="Georgii-Hemming P."/>
            <person name="Gingeras T.R."/>
            <person name="Gojobori T."/>
            <person name="Green R.E."/>
            <person name="Gustincich S."/>
            <person name="Harbers M."/>
            <person name="Hayashi Y."/>
            <person name="Hensch T.K."/>
            <person name="Hirokawa N."/>
            <person name="Hill D."/>
            <person name="Huminiecki L."/>
            <person name="Iacono M."/>
            <person name="Ikeo K."/>
            <person name="Iwama A."/>
            <person name="Ishikawa T."/>
            <person name="Jakt M."/>
            <person name="Kanapin A."/>
            <person name="Katoh M."/>
            <person name="Kawasawa Y."/>
            <person name="Kelso J."/>
            <person name="Kitamura H."/>
            <person name="Kitano H."/>
            <person name="Kollias G."/>
            <person name="Krishnan S.P."/>
            <person name="Kruger A."/>
            <person name="Kummerfeld S.K."/>
            <person name="Kurochkin I.V."/>
            <person name="Lareau L.F."/>
            <person name="Lazarevic D."/>
            <person name="Lipovich L."/>
            <person name="Liu J."/>
            <person name="Liuni S."/>
            <person name="McWilliam S."/>
            <person name="Madan Babu M."/>
            <person name="Madera M."/>
            <person name="Marchionni L."/>
            <person name="Matsuda H."/>
            <person name="Matsuzawa S."/>
            <person name="Miki H."/>
            <person name="Mignone F."/>
            <person name="Miyake S."/>
            <person name="Morris K."/>
            <person name="Mottagui-Tabar S."/>
            <person name="Mulder N."/>
            <person name="Nakano N."/>
            <person name="Nakauchi H."/>
            <person name="Ng P."/>
            <person name="Nilsson R."/>
            <person name="Nishiguchi S."/>
            <person name="Nishikawa S."/>
            <person name="Nori F."/>
            <person name="Ohara O."/>
            <person name="Okazaki Y."/>
            <person name="Orlando V."/>
            <person name="Pang K.C."/>
            <person name="Pavan W.J."/>
            <person name="Pavesi G."/>
            <person name="Pesole G."/>
            <person name="Petrovsky N."/>
            <person name="Piazza S."/>
            <person name="Reed J."/>
            <person name="Reid J.F."/>
            <person name="Ring B.Z."/>
            <person name="Ringwald M."/>
            <person name="Rost B."/>
            <person name="Ruan Y."/>
            <person name="Salzberg S.L."/>
            <person name="Sandelin A."/>
            <person name="Schneider C."/>
            <person name="Schoenbach C."/>
            <person name="Sekiguchi K."/>
            <person name="Semple C.A."/>
            <person name="Seno S."/>
            <person name="Sessa L."/>
            <person name="Sheng Y."/>
            <person name="Shibata Y."/>
            <person name="Shimada H."/>
            <person name="Shimada K."/>
            <person name="Silva D."/>
            <person name="Sinclair B."/>
            <person name="Sperling S."/>
            <person name="Stupka E."/>
            <person name="Sugiura K."/>
            <person name="Sultana R."/>
            <person name="Takenaka Y."/>
            <person name="Taki K."/>
            <person name="Tammoja K."/>
            <person name="Tan S.L."/>
            <person name="Tang S."/>
            <person name="Taylor M.S."/>
            <person name="Tegner J."/>
            <person name="Teichmann S.A."/>
            <person name="Ueda H.R."/>
            <person name="van Nimwegen E."/>
            <person name="Verardo R."/>
            <person name="Wei C.L."/>
            <person name="Yagi K."/>
            <person name="Yamanishi H."/>
            <person name="Zabarovsky E."/>
            <person name="Zhu S."/>
            <person name="Zimmer A."/>
            <person name="Hide W."/>
            <person name="Bult C."/>
            <person name="Grimmond S.M."/>
            <person name="Teasdale R.D."/>
            <person name="Liu E.T."/>
            <person name="Brusic V."/>
            <person name="Quackenbush J."/>
            <person name="Wahlestedt C."/>
            <person name="Mattick J.S."/>
            <person name="Hume D.A."/>
            <person name="Kai C."/>
            <person name="Sasaki D."/>
            <person name="Tomaru Y."/>
            <person name="Fukuda S."/>
            <person name="Kanamori-Katayama M."/>
            <person name="Suzuki M."/>
            <person name="Aoki J."/>
            <person name="Arakawa T."/>
            <person name="Iida J."/>
            <person name="Imamura K."/>
            <person name="Itoh M."/>
            <person name="Kato T."/>
            <person name="Kawaji H."/>
            <person name="Kawagashira N."/>
            <person name="Kawashima T."/>
            <person name="Kojima M."/>
            <person name="Kondo S."/>
            <person name="Konno H."/>
            <person name="Nakano K."/>
            <person name="Ninomiya N."/>
            <person name="Nishio T."/>
            <person name="Okada M."/>
            <person name="Plessy C."/>
            <person name="Shibata K."/>
            <person name="Shiraki T."/>
            <person name="Suzuki S."/>
            <person name="Tagami M."/>
            <person name="Waki K."/>
            <person name="Watahiki A."/>
            <person name="Okamura-Oho Y."/>
            <person name="Suzuki H."/>
            <person name="Kawai J."/>
            <person name="Hayashizaki Y."/>
        </authorList>
    </citation>
    <scope>NUCLEOTIDE SEQUENCE [LARGE SCALE MRNA] (ISOFORMS 1 AND 3)</scope>
    <source>
        <strain>C57BL/6J</strain>
        <tissue>Oviduct</tissue>
        <tissue>Vagina</tissue>
    </source>
</reference>
<reference key="2">
    <citation type="journal article" date="2009" name="PLoS Biol.">
        <title>Lineage-specific biology revealed by a finished genome assembly of the mouse.</title>
        <authorList>
            <person name="Church D.M."/>
            <person name="Goodstadt L."/>
            <person name="Hillier L.W."/>
            <person name="Zody M.C."/>
            <person name="Goldstein S."/>
            <person name="She X."/>
            <person name="Bult C.J."/>
            <person name="Agarwala R."/>
            <person name="Cherry J.L."/>
            <person name="DiCuccio M."/>
            <person name="Hlavina W."/>
            <person name="Kapustin Y."/>
            <person name="Meric P."/>
            <person name="Maglott D."/>
            <person name="Birtle Z."/>
            <person name="Marques A.C."/>
            <person name="Graves T."/>
            <person name="Zhou S."/>
            <person name="Teague B."/>
            <person name="Potamousis K."/>
            <person name="Churas C."/>
            <person name="Place M."/>
            <person name="Herschleb J."/>
            <person name="Runnheim R."/>
            <person name="Forrest D."/>
            <person name="Amos-Landgraf J."/>
            <person name="Schwartz D.C."/>
            <person name="Cheng Z."/>
            <person name="Lindblad-Toh K."/>
            <person name="Eichler E.E."/>
            <person name="Ponting C.P."/>
        </authorList>
    </citation>
    <scope>NUCLEOTIDE SEQUENCE [LARGE SCALE GENOMIC DNA]</scope>
    <source>
        <strain>C57BL/6J</strain>
    </source>
</reference>
<reference key="3">
    <citation type="journal article" date="2004" name="Genome Res.">
        <title>The status, quality, and expansion of the NIH full-length cDNA project: the Mammalian Gene Collection (MGC).</title>
        <authorList>
            <consortium name="The MGC Project Team"/>
        </authorList>
    </citation>
    <scope>NUCLEOTIDE SEQUENCE [LARGE SCALE MRNA] (ISOFORM 2)</scope>
    <scope>NUCLEOTIDE SEQUENCE [LARGE SCALE MRNA] OF 195-474 (ISOFORM 4)</scope>
    <source>
        <strain>Czech II</strain>
        <strain>FVB/N-3</strain>
        <tissue>Mammary tumor</tissue>
    </source>
</reference>
<feature type="chain" id="PRO_0000320676" description="Pleckstrin homology domain-containing family S member 1">
    <location>
        <begin position="1"/>
        <end position="474"/>
    </location>
</feature>
<feature type="domain" description="PH" evidence="1">
    <location>
        <begin position="20"/>
        <end position="135"/>
    </location>
</feature>
<feature type="region of interest" description="Disordered" evidence="2">
    <location>
        <begin position="232"/>
        <end position="251"/>
    </location>
</feature>
<feature type="region of interest" description="Disordered" evidence="2">
    <location>
        <begin position="272"/>
        <end position="321"/>
    </location>
</feature>
<feature type="region of interest" description="Disordered" evidence="2">
    <location>
        <begin position="449"/>
        <end position="474"/>
    </location>
</feature>
<feature type="compositionally biased region" description="Polar residues" evidence="2">
    <location>
        <begin position="238"/>
        <end position="248"/>
    </location>
</feature>
<feature type="compositionally biased region" description="Basic and acidic residues" evidence="2">
    <location>
        <begin position="449"/>
        <end position="458"/>
    </location>
</feature>
<feature type="splice variant" id="VSP_031732" description="In isoform 2 and isoform 3." evidence="3 4">
    <location>
        <position position="76"/>
    </location>
</feature>
<feature type="splice variant" id="VSP_031733" description="In isoform 3." evidence="4">
    <original>E</original>
    <variation>EQ</variation>
    <location>
        <position position="145"/>
    </location>
</feature>
<feature type="splice variant" id="VSP_031734" description="In isoform 4." evidence="3">
    <original>Q</original>
    <variation>QTSPE</variation>
    <location>
        <position position="287"/>
    </location>
</feature>
<feature type="splice variant" id="VSP_031735" description="In isoform 2." evidence="3">
    <original>N</original>
    <variation>K</variation>
    <location>
        <position position="336"/>
    </location>
</feature>
<feature type="splice variant" id="VSP_031736" description="In isoform 2." evidence="3">
    <location>
        <begin position="337"/>
        <end position="474"/>
    </location>
</feature>
<feature type="sequence conflict" description="In Ref. 3; AAH23098." evidence="5" ref="3">
    <original>N</original>
    <variation>D</variation>
    <location>
        <position position="280"/>
    </location>
</feature>
<feature type="sequence conflict" description="In Ref. 3; AAH23098." evidence="5" ref="3">
    <original>D</original>
    <variation>G</variation>
    <location>
        <position position="319"/>
    </location>
</feature>
<feature type="sequence conflict" description="In Ref. 1; BAC35594." evidence="5" ref="1">
    <original>E</original>
    <variation>G</variation>
    <location>
        <position position="455"/>
    </location>
</feature>
<organism>
    <name type="scientific">Mus musculus</name>
    <name type="common">Mouse</name>
    <dbReference type="NCBI Taxonomy" id="10090"/>
    <lineage>
        <taxon>Eukaryota</taxon>
        <taxon>Metazoa</taxon>
        <taxon>Chordata</taxon>
        <taxon>Craniata</taxon>
        <taxon>Vertebrata</taxon>
        <taxon>Euteleostomi</taxon>
        <taxon>Mammalia</taxon>
        <taxon>Eutheria</taxon>
        <taxon>Euarchontoglires</taxon>
        <taxon>Glires</taxon>
        <taxon>Rodentia</taxon>
        <taxon>Myomorpha</taxon>
        <taxon>Muroidea</taxon>
        <taxon>Muridae</taxon>
        <taxon>Murinae</taxon>
        <taxon>Mus</taxon>
        <taxon>Mus</taxon>
    </lineage>
</organism>
<proteinExistence type="evidence at transcript level"/>
<sequence>MEARPPKGPGKQFTFDYENEVHKRDYFIKSPPPQLFFSGTSWKKRLFILSQSRGTGLSLSYYKDHQHRGSIEIDGSSTVEVGINCQEKMQSVQKMFKCHPDEVMSIRTANRDYFLIGHDREKIKDWVSFMTPYCQGVKATHQRAEEKLSLGDRRPVSDPSPFLGLCSIPEGIRLASPRASLPEHLIQKSLQRFRQAHLHQDHDFHSEPTQDTEEEYYLTPRSLEACLELENIAGPNDSGDSIESNSPDQGFKRAESNYVSMRSLRTCLLKESTSASADDNDGQAEFQTESELGPPHQDSGTGSDPCLSPPNSKAQTTDDQKGSASLTVVKLSILLNNIPDESQVETLNVFLSPRDAIDYLALVEAAGQICVARWEGPPRLGCLFYHGDHILAVNDLKPQSLEEVSLFLTRCIQKEKVKLSIGRIPNSEKLHASPCACSLRHQLAESVQRDLPELERTPKRSPAIKKSQKEAAGE</sequence>
<name>PKHS1_MOUSE</name>
<evidence type="ECO:0000255" key="1">
    <source>
        <dbReference type="PROSITE-ProRule" id="PRU00145"/>
    </source>
</evidence>
<evidence type="ECO:0000256" key="2">
    <source>
        <dbReference type="SAM" id="MobiDB-lite"/>
    </source>
</evidence>
<evidence type="ECO:0000303" key="3">
    <source>
    </source>
</evidence>
<evidence type="ECO:0000303" key="4">
    <source>
    </source>
</evidence>
<evidence type="ECO:0000305" key="5"/>
<evidence type="ECO:0000312" key="6">
    <source>
        <dbReference type="MGI" id="MGI:2443041"/>
    </source>
</evidence>
<accession>Q8BW88</accession>
<accession>E9QMW0</accession>
<accession>Q5EAT4</accession>
<accession>Q8BZ18</accession>
<accession>Q8R5A9</accession>
<dbReference type="EMBL" id="AK036908">
    <property type="protein sequence ID" value="BAC29634.1"/>
    <property type="status" value="ALT_INIT"/>
    <property type="molecule type" value="mRNA"/>
</dbReference>
<dbReference type="EMBL" id="AK053921">
    <property type="protein sequence ID" value="BAC35594.1"/>
    <property type="molecule type" value="mRNA"/>
</dbReference>
<dbReference type="EMBL" id="AC166746">
    <property type="status" value="NOT_ANNOTATED_CDS"/>
    <property type="molecule type" value="Genomic_DNA"/>
</dbReference>
<dbReference type="EMBL" id="BC023098">
    <property type="protein sequence ID" value="AAH23098.1"/>
    <property type="molecule type" value="mRNA"/>
</dbReference>
<dbReference type="EMBL" id="BC090250">
    <property type="protein sequence ID" value="AAH90250.1"/>
    <property type="molecule type" value="mRNA"/>
</dbReference>
<dbReference type="CCDS" id="CCDS29916.1">
    <molecule id="Q8BW88-1"/>
</dbReference>
<dbReference type="CCDS" id="CCDS57148.1">
    <molecule id="Q8BW88-3"/>
</dbReference>
<dbReference type="RefSeq" id="NP_001157735.1">
    <molecule id="Q8BW88-3"/>
    <property type="nucleotide sequence ID" value="NM_001164263.1"/>
</dbReference>
<dbReference type="RefSeq" id="NP_766229.2">
    <molecule id="Q8BW88-1"/>
    <property type="nucleotide sequence ID" value="NM_172641.3"/>
</dbReference>
<dbReference type="RefSeq" id="XP_006527081.1">
    <molecule id="Q8BW88-1"/>
    <property type="nucleotide sequence ID" value="XM_006527018.3"/>
</dbReference>
<dbReference type="SMR" id="Q8BW88"/>
<dbReference type="FunCoup" id="Q8BW88">
    <property type="interactions" value="111"/>
</dbReference>
<dbReference type="STRING" id="10090.ENSMUSP00000035440"/>
<dbReference type="iPTMnet" id="Q8BW88"/>
<dbReference type="PhosphoSitePlus" id="Q8BW88"/>
<dbReference type="PaxDb" id="10090-ENSMUSP00000035440"/>
<dbReference type="ProteomicsDB" id="289513">
    <molecule id="Q8BW88-1"/>
</dbReference>
<dbReference type="ProteomicsDB" id="289514">
    <molecule id="Q8BW88-2"/>
</dbReference>
<dbReference type="ProteomicsDB" id="289515">
    <molecule id="Q8BW88-3"/>
</dbReference>
<dbReference type="ProteomicsDB" id="289516">
    <molecule id="Q8BW88-4"/>
</dbReference>
<dbReference type="Antibodypedia" id="31887">
    <property type="antibodies" value="67 antibodies from 12 providers"/>
</dbReference>
<dbReference type="DNASU" id="226245"/>
<dbReference type="Ensembl" id="ENSMUST00000039666.8">
    <molecule id="Q8BW88-1"/>
    <property type="protein sequence ID" value="ENSMUSP00000035440.7"/>
    <property type="gene ID" value="ENSMUSG00000035818.15"/>
</dbReference>
<dbReference type="Ensembl" id="ENSMUST00000178590.9">
    <molecule id="Q8BW88-3"/>
    <property type="protein sequence ID" value="ENSMUSP00000136674.2"/>
    <property type="gene ID" value="ENSMUSG00000035818.15"/>
</dbReference>
<dbReference type="GeneID" id="226245"/>
<dbReference type="KEGG" id="mmu:226245"/>
<dbReference type="UCSC" id="uc008hyy.2">
    <molecule id="Q8BW88-1"/>
    <property type="organism name" value="mouse"/>
</dbReference>
<dbReference type="UCSC" id="uc008hyz.2">
    <molecule id="Q8BW88-3"/>
    <property type="organism name" value="mouse"/>
</dbReference>
<dbReference type="AGR" id="MGI:2443041"/>
<dbReference type="CTD" id="79949"/>
<dbReference type="MGI" id="MGI:2443041">
    <property type="gene designation" value="Plekhs1"/>
</dbReference>
<dbReference type="VEuPathDB" id="HostDB:ENSMUSG00000035818"/>
<dbReference type="eggNOG" id="ENOG502RDEC">
    <property type="taxonomic scope" value="Eukaryota"/>
</dbReference>
<dbReference type="GeneTree" id="ENSGT00390000006729"/>
<dbReference type="HOGENOM" id="CLU_049125_1_0_1"/>
<dbReference type="InParanoid" id="Q8BW88"/>
<dbReference type="OMA" id="QPDQVMS"/>
<dbReference type="OrthoDB" id="9900190at2759"/>
<dbReference type="TreeFam" id="TF334193"/>
<dbReference type="BioGRID-ORCS" id="226245">
    <property type="hits" value="2 hits in 78 CRISPR screens"/>
</dbReference>
<dbReference type="PRO" id="PR:Q8BW88"/>
<dbReference type="Proteomes" id="UP000000589">
    <property type="component" value="Chromosome 19"/>
</dbReference>
<dbReference type="RNAct" id="Q8BW88">
    <property type="molecule type" value="protein"/>
</dbReference>
<dbReference type="Bgee" id="ENSMUSG00000035818">
    <property type="expression patterns" value="Expressed in prostate gland ventral lobe and 40 other cell types or tissues"/>
</dbReference>
<dbReference type="ExpressionAtlas" id="Q8BW88">
    <property type="expression patterns" value="baseline and differential"/>
</dbReference>
<dbReference type="Gene3D" id="2.30.29.30">
    <property type="entry name" value="Pleckstrin-homology domain (PH domain)/Phosphotyrosine-binding domain (PTB)"/>
    <property type="match status" value="1"/>
</dbReference>
<dbReference type="InterPro" id="IPR011993">
    <property type="entry name" value="PH-like_dom_sf"/>
</dbReference>
<dbReference type="InterPro" id="IPR001849">
    <property type="entry name" value="PH_domain"/>
</dbReference>
<dbReference type="InterPro" id="IPR042986">
    <property type="entry name" value="PLEKHS1"/>
</dbReference>
<dbReference type="PANTHER" id="PTHR47014">
    <property type="entry name" value="PLECKSTRIN HOMOLOGY DOMAIN-CONTAINING FAMILY S MEMBER 1"/>
    <property type="match status" value="1"/>
</dbReference>
<dbReference type="PANTHER" id="PTHR47014:SF1">
    <property type="entry name" value="PLECKSTRIN HOMOLOGY DOMAIN-CONTAINING FAMILY S MEMBER 1"/>
    <property type="match status" value="1"/>
</dbReference>
<dbReference type="SMART" id="SM00233">
    <property type="entry name" value="PH"/>
    <property type="match status" value="1"/>
</dbReference>
<dbReference type="SUPFAM" id="SSF50729">
    <property type="entry name" value="PH domain-like"/>
    <property type="match status" value="1"/>
</dbReference>
<dbReference type="PROSITE" id="PS50003">
    <property type="entry name" value="PH_DOMAIN"/>
    <property type="match status" value="1"/>
</dbReference>
<comment type="alternative products">
    <event type="alternative splicing"/>
    <isoform>
        <id>Q8BW88-1</id>
        <name>1</name>
        <sequence type="displayed"/>
    </isoform>
    <isoform>
        <id>Q8BW88-2</id>
        <name>2</name>
        <sequence type="described" ref="VSP_031732 VSP_031735 VSP_031736"/>
    </isoform>
    <isoform>
        <id>Q8BW88-3</id>
        <name>3</name>
        <sequence type="described" ref="VSP_031732 VSP_031733"/>
    </isoform>
    <isoform>
        <id>Q8BW88-4</id>
        <name>4</name>
        <sequence type="described" ref="VSP_031734"/>
    </isoform>
</comment>
<comment type="sequence caution" evidence="5">
    <conflict type="erroneous initiation">
        <sequence resource="EMBL-CDS" id="BAC29634"/>
    </conflict>
    <text>Extended N-terminus.</text>
</comment>
<protein>
    <recommendedName>
        <fullName evidence="5">Pleckstrin homology domain-containing family S member 1</fullName>
        <shortName>PH domain-containing family S member 1</shortName>
    </recommendedName>
</protein>